<dbReference type="EC" id="2.7.7.13" evidence="1"/>
<dbReference type="EMBL" id="BC129595">
    <property type="protein sequence ID" value="AAI29596.1"/>
    <property type="molecule type" value="mRNA"/>
</dbReference>
<dbReference type="RefSeq" id="NP_001091347.1">
    <property type="nucleotide sequence ID" value="NM_001097878.1"/>
</dbReference>
<dbReference type="RefSeq" id="XP_018114729.1">
    <property type="nucleotide sequence ID" value="XM_018259240.1"/>
</dbReference>
<dbReference type="SMR" id="A2VD83"/>
<dbReference type="DNASU" id="100037186"/>
<dbReference type="GeneID" id="100037186"/>
<dbReference type="KEGG" id="xla:100037186"/>
<dbReference type="AGR" id="Xenbase:XB-GENE-6255238"/>
<dbReference type="CTD" id="100037186"/>
<dbReference type="Xenbase" id="XB-GENE-6255238">
    <property type="gene designation" value="gmppb.S"/>
</dbReference>
<dbReference type="OrthoDB" id="1733332at2759"/>
<dbReference type="UniPathway" id="UPA00126">
    <property type="reaction ID" value="UER00930"/>
</dbReference>
<dbReference type="Proteomes" id="UP000186698">
    <property type="component" value="Chromosome 4S"/>
</dbReference>
<dbReference type="Bgee" id="100037186">
    <property type="expression patterns" value="Expressed in neurula embryo and 18 other cell types or tissues"/>
</dbReference>
<dbReference type="GO" id="GO:0005737">
    <property type="term" value="C:cytoplasm"/>
    <property type="evidence" value="ECO:0000318"/>
    <property type="project" value="GO_Central"/>
</dbReference>
<dbReference type="GO" id="GO:0005525">
    <property type="term" value="F:GTP binding"/>
    <property type="evidence" value="ECO:0007669"/>
    <property type="project" value="UniProtKB-KW"/>
</dbReference>
<dbReference type="GO" id="GO:0004475">
    <property type="term" value="F:mannose-1-phosphate guanylyltransferase (GTP) activity"/>
    <property type="evidence" value="ECO:0000318"/>
    <property type="project" value="GO_Central"/>
</dbReference>
<dbReference type="GO" id="GO:0009298">
    <property type="term" value="P:GDP-mannose biosynthetic process"/>
    <property type="evidence" value="ECO:0000250"/>
    <property type="project" value="UniProtKB"/>
</dbReference>
<dbReference type="GO" id="GO:0006486">
    <property type="term" value="P:protein glycosylation"/>
    <property type="evidence" value="ECO:0000318"/>
    <property type="project" value="GO_Central"/>
</dbReference>
<dbReference type="CDD" id="cd06425">
    <property type="entry name" value="M1P_guanylylT_B_like_N"/>
    <property type="match status" value="1"/>
</dbReference>
<dbReference type="FunFam" id="2.160.10.10:FF:000018">
    <property type="entry name" value="Mannose-1-phosphate guanyltransferase beta"/>
    <property type="match status" value="1"/>
</dbReference>
<dbReference type="FunFam" id="3.90.550.10:FF:000013">
    <property type="entry name" value="mannose-1-phosphate guanyltransferase beta"/>
    <property type="match status" value="1"/>
</dbReference>
<dbReference type="Gene3D" id="2.160.10.10">
    <property type="entry name" value="Hexapeptide repeat proteins"/>
    <property type="match status" value="1"/>
</dbReference>
<dbReference type="Gene3D" id="3.90.550.10">
    <property type="entry name" value="Spore Coat Polysaccharide Biosynthesis Protein SpsA, Chain A"/>
    <property type="match status" value="1"/>
</dbReference>
<dbReference type="InterPro" id="IPR056729">
    <property type="entry name" value="GMPPB_C"/>
</dbReference>
<dbReference type="InterPro" id="IPR045233">
    <property type="entry name" value="GMPPB_N"/>
</dbReference>
<dbReference type="InterPro" id="IPR018357">
    <property type="entry name" value="Hexapep_transf_CS"/>
</dbReference>
<dbReference type="InterPro" id="IPR050486">
    <property type="entry name" value="Mannose-1P_guanyltransferase"/>
</dbReference>
<dbReference type="InterPro" id="IPR005835">
    <property type="entry name" value="NTP_transferase_dom"/>
</dbReference>
<dbReference type="InterPro" id="IPR029044">
    <property type="entry name" value="Nucleotide-diphossugar_trans"/>
</dbReference>
<dbReference type="PANTHER" id="PTHR22572">
    <property type="entry name" value="SUGAR-1-PHOSPHATE GUANYL TRANSFERASE"/>
    <property type="match status" value="1"/>
</dbReference>
<dbReference type="Pfam" id="PF25087">
    <property type="entry name" value="GMPPB_C"/>
    <property type="match status" value="1"/>
</dbReference>
<dbReference type="Pfam" id="PF00483">
    <property type="entry name" value="NTP_transferase"/>
    <property type="match status" value="1"/>
</dbReference>
<dbReference type="SUPFAM" id="SSF53448">
    <property type="entry name" value="Nucleotide-diphospho-sugar transferases"/>
    <property type="match status" value="1"/>
</dbReference>
<dbReference type="PROSITE" id="PS00101">
    <property type="entry name" value="HEXAPEP_TRANSFERASES"/>
    <property type="match status" value="1"/>
</dbReference>
<gene>
    <name type="primary">gmppb-b</name>
</gene>
<accession>A2VD83</accession>
<sequence>MKALILVGGYGTRLRPLTLSVPKPLVDFCNKPILLHQVEALVKAGVTHVILAVSYMSDMLEKEMKEQEKRLGIRISMSHEKEPLGTAGPLALARELLTENSEPFFVLNSDVICDFPFEDMVRFHKHHGKEGTIVVTKVEEPSKYGVVIYEAESGRIQRFVEKPQVFVSNKINSGLYIFSPAVLDRIQLRPTSIEKEIFPVMAQEGQLFALELQGFWMDIGQPKDFLTGMCMYLQSVRHKHPERLHVGPGFTGNVLVDPTAKIGQNCSIGPNVTIGPGVTVEDGVRIKRCSIMKGSRLHSHSWLQSSIVGWSSSVGQWVRMENVTVLGEDVIVNDELYLNGANVLPHKCISESVPEPRIIM</sequence>
<name>GMPBB_XENLA</name>
<keyword id="KW-0342">GTP-binding</keyword>
<keyword id="KW-0547">Nucleotide-binding</keyword>
<keyword id="KW-0548">Nucleotidyltransferase</keyword>
<keyword id="KW-1185">Reference proteome</keyword>
<keyword id="KW-0808">Transferase</keyword>
<feature type="chain" id="PRO_0000307167" description="Mannose-1-phosphate guanyltransferase beta-B">
    <location>
        <begin position="1"/>
        <end position="360"/>
    </location>
</feature>
<reference key="1">
    <citation type="submission" date="2006-12" db="EMBL/GenBank/DDBJ databases">
        <authorList>
            <consortium name="NIH - Xenopus Gene Collection (XGC) project"/>
        </authorList>
    </citation>
    <scope>NUCLEOTIDE SEQUENCE [LARGE SCALE MRNA]</scope>
    <source>
        <tissue>Intestine</tissue>
    </source>
</reference>
<protein>
    <recommendedName>
        <fullName>Mannose-1-phosphate guanyltransferase beta-B</fullName>
        <ecNumber evidence="1">2.7.7.13</ecNumber>
    </recommendedName>
    <alternativeName>
        <fullName>GDP-mannose pyrophosphorylase B-B</fullName>
    </alternativeName>
    <alternativeName>
        <fullName>GTP-mannose-1-phosphate guanylyltransferase beta-B</fullName>
    </alternativeName>
</protein>
<proteinExistence type="evidence at transcript level"/>
<comment type="function">
    <text evidence="1">Catalyzes the formation of GDP-mannose, an essential precursor of glycan moieties of glycoproteins and glycolipids.</text>
</comment>
<comment type="catalytic activity">
    <reaction evidence="1">
        <text>alpha-D-mannose 1-phosphate + GTP + H(+) = GDP-alpha-D-mannose + diphosphate</text>
        <dbReference type="Rhea" id="RHEA:15229"/>
        <dbReference type="ChEBI" id="CHEBI:15378"/>
        <dbReference type="ChEBI" id="CHEBI:33019"/>
        <dbReference type="ChEBI" id="CHEBI:37565"/>
        <dbReference type="ChEBI" id="CHEBI:57527"/>
        <dbReference type="ChEBI" id="CHEBI:58409"/>
        <dbReference type="EC" id="2.7.7.13"/>
    </reaction>
</comment>
<comment type="pathway">
    <text evidence="1">Nucleotide-sugar biosynthesis; GDP-alpha-D-mannose biosynthesis; GDP-alpha-D-mannose from alpha-D-mannose 1-phosphate (GTP route): step 1/1.</text>
</comment>
<comment type="similarity">
    <text evidence="2">Belongs to the transferase hexapeptide repeat family.</text>
</comment>
<evidence type="ECO:0000250" key="1">
    <source>
        <dbReference type="UniProtKB" id="P0C5I2"/>
    </source>
</evidence>
<evidence type="ECO:0000305" key="2"/>
<organism>
    <name type="scientific">Xenopus laevis</name>
    <name type="common">African clawed frog</name>
    <dbReference type="NCBI Taxonomy" id="8355"/>
    <lineage>
        <taxon>Eukaryota</taxon>
        <taxon>Metazoa</taxon>
        <taxon>Chordata</taxon>
        <taxon>Craniata</taxon>
        <taxon>Vertebrata</taxon>
        <taxon>Euteleostomi</taxon>
        <taxon>Amphibia</taxon>
        <taxon>Batrachia</taxon>
        <taxon>Anura</taxon>
        <taxon>Pipoidea</taxon>
        <taxon>Pipidae</taxon>
        <taxon>Xenopodinae</taxon>
        <taxon>Xenopus</taxon>
        <taxon>Xenopus</taxon>
    </lineage>
</organism>